<accession>P0ACN0</accession>
<accession>P32133</accession>
<sequence length="236" mass="26939">MAENQSTVENAKEKLDRWLKDGITTPGGKLPSERELGELLGIKRMTLRQALLNLEAESKIFRKDRKGWFVTQPRFNYSPELSASFQRAAIEQGREPSWGFTEKNRTSDIPETLAPLIAVTPSTELYRITGWGALEGHKVFYHETYINPEVAPGFIEQLENHSFSAVWEKCYQKETVVKKLIFKPVRMPGDISKYLGGSAGMPAILIEKHRADQQGNIVQIDIEYWRFEAVDLIINL</sequence>
<name>YIHL_ECO57</name>
<organism>
    <name type="scientific">Escherichia coli O157:H7</name>
    <dbReference type="NCBI Taxonomy" id="83334"/>
    <lineage>
        <taxon>Bacteria</taxon>
        <taxon>Pseudomonadati</taxon>
        <taxon>Pseudomonadota</taxon>
        <taxon>Gammaproteobacteria</taxon>
        <taxon>Enterobacterales</taxon>
        <taxon>Enterobacteriaceae</taxon>
        <taxon>Escherichia</taxon>
    </lineage>
</organism>
<feature type="chain" id="PRO_0000050684" description="Uncharacterized HTH-type transcriptional regulator YihL">
    <location>
        <begin position="1"/>
        <end position="236"/>
    </location>
</feature>
<feature type="domain" description="HTH gntR-type" evidence="1">
    <location>
        <begin position="5"/>
        <end position="73"/>
    </location>
</feature>
<feature type="DNA-binding region" description="H-T-H motif" evidence="1">
    <location>
        <begin position="33"/>
        <end position="52"/>
    </location>
</feature>
<proteinExistence type="predicted"/>
<protein>
    <recommendedName>
        <fullName>Uncharacterized HTH-type transcriptional regulator YihL</fullName>
    </recommendedName>
</protein>
<keyword id="KW-0238">DNA-binding</keyword>
<keyword id="KW-1185">Reference proteome</keyword>
<keyword id="KW-0804">Transcription</keyword>
<keyword id="KW-0805">Transcription regulation</keyword>
<gene>
    <name type="primary">yihL</name>
    <name type="ordered locus">Z5408</name>
    <name type="ordered locus">ECs4794</name>
</gene>
<evidence type="ECO:0000255" key="1">
    <source>
        <dbReference type="PROSITE-ProRule" id="PRU00307"/>
    </source>
</evidence>
<reference key="1">
    <citation type="journal article" date="2001" name="Nature">
        <title>Genome sequence of enterohaemorrhagic Escherichia coli O157:H7.</title>
        <authorList>
            <person name="Perna N.T."/>
            <person name="Plunkett G. III"/>
            <person name="Burland V."/>
            <person name="Mau B."/>
            <person name="Glasner J.D."/>
            <person name="Rose D.J."/>
            <person name="Mayhew G.F."/>
            <person name="Evans P.S."/>
            <person name="Gregor J."/>
            <person name="Kirkpatrick H.A."/>
            <person name="Posfai G."/>
            <person name="Hackett J."/>
            <person name="Klink S."/>
            <person name="Boutin A."/>
            <person name="Shao Y."/>
            <person name="Miller L."/>
            <person name="Grotbeck E.J."/>
            <person name="Davis N.W."/>
            <person name="Lim A."/>
            <person name="Dimalanta E.T."/>
            <person name="Potamousis K."/>
            <person name="Apodaca J."/>
            <person name="Anantharaman T.S."/>
            <person name="Lin J."/>
            <person name="Yen G."/>
            <person name="Schwartz D.C."/>
            <person name="Welch R.A."/>
            <person name="Blattner F.R."/>
        </authorList>
    </citation>
    <scope>NUCLEOTIDE SEQUENCE [LARGE SCALE GENOMIC DNA]</scope>
    <source>
        <strain>O157:H7 / EDL933 / ATCC 700927 / EHEC</strain>
    </source>
</reference>
<reference key="2">
    <citation type="journal article" date="2001" name="DNA Res.">
        <title>Complete genome sequence of enterohemorrhagic Escherichia coli O157:H7 and genomic comparison with a laboratory strain K-12.</title>
        <authorList>
            <person name="Hayashi T."/>
            <person name="Makino K."/>
            <person name="Ohnishi M."/>
            <person name="Kurokawa K."/>
            <person name="Ishii K."/>
            <person name="Yokoyama K."/>
            <person name="Han C.-G."/>
            <person name="Ohtsubo E."/>
            <person name="Nakayama K."/>
            <person name="Murata T."/>
            <person name="Tanaka M."/>
            <person name="Tobe T."/>
            <person name="Iida T."/>
            <person name="Takami H."/>
            <person name="Honda T."/>
            <person name="Sasakawa C."/>
            <person name="Ogasawara N."/>
            <person name="Yasunaga T."/>
            <person name="Kuhara S."/>
            <person name="Shiba T."/>
            <person name="Hattori M."/>
            <person name="Shinagawa H."/>
        </authorList>
    </citation>
    <scope>NUCLEOTIDE SEQUENCE [LARGE SCALE GENOMIC DNA]</scope>
    <source>
        <strain>O157:H7 / Sakai / RIMD 0509952 / EHEC</strain>
    </source>
</reference>
<dbReference type="EMBL" id="AE005174">
    <property type="protein sequence ID" value="AAG59061.1"/>
    <property type="molecule type" value="Genomic_DNA"/>
</dbReference>
<dbReference type="EMBL" id="BA000007">
    <property type="protein sequence ID" value="BAB38217.1"/>
    <property type="molecule type" value="Genomic_DNA"/>
</dbReference>
<dbReference type="PIR" id="A86075">
    <property type="entry name" value="A86075"/>
</dbReference>
<dbReference type="PIR" id="B91228">
    <property type="entry name" value="B91228"/>
</dbReference>
<dbReference type="RefSeq" id="NP_312821.1">
    <property type="nucleotide sequence ID" value="NC_002695.1"/>
</dbReference>
<dbReference type="RefSeq" id="WP_000829798.1">
    <property type="nucleotide sequence ID" value="NZ_VOAI01000016.1"/>
</dbReference>
<dbReference type="SMR" id="P0ACN0"/>
<dbReference type="STRING" id="155864.Z5408"/>
<dbReference type="GeneID" id="915101"/>
<dbReference type="KEGG" id="ece:Z5408"/>
<dbReference type="KEGG" id="ecs:ECs_4794"/>
<dbReference type="PATRIC" id="fig|386585.9.peg.5009"/>
<dbReference type="eggNOG" id="COG2188">
    <property type="taxonomic scope" value="Bacteria"/>
</dbReference>
<dbReference type="HOGENOM" id="CLU_063236_2_2_6"/>
<dbReference type="OMA" id="FYHETFI"/>
<dbReference type="Proteomes" id="UP000000558">
    <property type="component" value="Chromosome"/>
</dbReference>
<dbReference type="Proteomes" id="UP000002519">
    <property type="component" value="Chromosome"/>
</dbReference>
<dbReference type="GO" id="GO:0003677">
    <property type="term" value="F:DNA binding"/>
    <property type="evidence" value="ECO:0007669"/>
    <property type="project" value="UniProtKB-KW"/>
</dbReference>
<dbReference type="GO" id="GO:0003700">
    <property type="term" value="F:DNA-binding transcription factor activity"/>
    <property type="evidence" value="ECO:0007669"/>
    <property type="project" value="InterPro"/>
</dbReference>
<dbReference type="GO" id="GO:0045892">
    <property type="term" value="P:negative regulation of DNA-templated transcription"/>
    <property type="evidence" value="ECO:0007669"/>
    <property type="project" value="TreeGrafter"/>
</dbReference>
<dbReference type="CDD" id="cd07377">
    <property type="entry name" value="WHTH_GntR"/>
    <property type="match status" value="1"/>
</dbReference>
<dbReference type="FunFam" id="1.10.10.10:FF:000351">
    <property type="entry name" value="GntR family transcriptional regulator"/>
    <property type="match status" value="1"/>
</dbReference>
<dbReference type="FunFam" id="3.40.1410.10:FF:000007">
    <property type="entry name" value="GntR family transcriptional regulator"/>
    <property type="match status" value="1"/>
</dbReference>
<dbReference type="Gene3D" id="3.40.1410.10">
    <property type="entry name" value="Chorismate lyase-like"/>
    <property type="match status" value="1"/>
</dbReference>
<dbReference type="Gene3D" id="1.10.10.10">
    <property type="entry name" value="Winged helix-like DNA-binding domain superfamily/Winged helix DNA-binding domain"/>
    <property type="match status" value="1"/>
</dbReference>
<dbReference type="InterPro" id="IPR050679">
    <property type="entry name" value="Bact_HTH_transcr_reg"/>
</dbReference>
<dbReference type="InterPro" id="IPR028978">
    <property type="entry name" value="Chorismate_lyase_/UTRA_dom_sf"/>
</dbReference>
<dbReference type="InterPro" id="IPR000524">
    <property type="entry name" value="Tscrpt_reg_HTH_GntR"/>
</dbReference>
<dbReference type="InterPro" id="IPR011663">
    <property type="entry name" value="UTRA"/>
</dbReference>
<dbReference type="InterPro" id="IPR036388">
    <property type="entry name" value="WH-like_DNA-bd_sf"/>
</dbReference>
<dbReference type="InterPro" id="IPR036390">
    <property type="entry name" value="WH_DNA-bd_sf"/>
</dbReference>
<dbReference type="PANTHER" id="PTHR44846">
    <property type="entry name" value="MANNOSYL-D-GLYCERATE TRANSPORT/METABOLISM SYSTEM REPRESSOR MNGR-RELATED"/>
    <property type="match status" value="1"/>
</dbReference>
<dbReference type="PANTHER" id="PTHR44846:SF7">
    <property type="entry name" value="TRANSCRIPTIONAL REGULATOR OF 2-AMINOETHYLPHOSPHONATE DEGRADATION OPERONS-RELATED"/>
    <property type="match status" value="1"/>
</dbReference>
<dbReference type="Pfam" id="PF00392">
    <property type="entry name" value="GntR"/>
    <property type="match status" value="1"/>
</dbReference>
<dbReference type="Pfam" id="PF07702">
    <property type="entry name" value="UTRA"/>
    <property type="match status" value="1"/>
</dbReference>
<dbReference type="PRINTS" id="PR00035">
    <property type="entry name" value="HTHGNTR"/>
</dbReference>
<dbReference type="SMART" id="SM00345">
    <property type="entry name" value="HTH_GNTR"/>
    <property type="match status" value="1"/>
</dbReference>
<dbReference type="SMART" id="SM00866">
    <property type="entry name" value="UTRA"/>
    <property type="match status" value="1"/>
</dbReference>
<dbReference type="SUPFAM" id="SSF64288">
    <property type="entry name" value="Chorismate lyase-like"/>
    <property type="match status" value="1"/>
</dbReference>
<dbReference type="SUPFAM" id="SSF46785">
    <property type="entry name" value="Winged helix' DNA-binding domain"/>
    <property type="match status" value="1"/>
</dbReference>
<dbReference type="PROSITE" id="PS50949">
    <property type="entry name" value="HTH_GNTR"/>
    <property type="match status" value="1"/>
</dbReference>